<evidence type="ECO:0000255" key="1">
    <source>
        <dbReference type="HAMAP-Rule" id="MF_00639"/>
    </source>
</evidence>
<proteinExistence type="inferred from homology"/>
<name>MURD_CLOPE</name>
<organism>
    <name type="scientific">Clostridium perfringens (strain 13 / Type A)</name>
    <dbReference type="NCBI Taxonomy" id="195102"/>
    <lineage>
        <taxon>Bacteria</taxon>
        <taxon>Bacillati</taxon>
        <taxon>Bacillota</taxon>
        <taxon>Clostridia</taxon>
        <taxon>Eubacteriales</taxon>
        <taxon>Clostridiaceae</taxon>
        <taxon>Clostridium</taxon>
    </lineage>
</organism>
<dbReference type="EC" id="6.3.2.9" evidence="1"/>
<dbReference type="EMBL" id="BA000016">
    <property type="protein sequence ID" value="BAB82165.1"/>
    <property type="molecule type" value="Genomic_DNA"/>
</dbReference>
<dbReference type="RefSeq" id="WP_011010916.1">
    <property type="nucleotide sequence ID" value="NC_003366.1"/>
</dbReference>
<dbReference type="SMR" id="Q8XHM4"/>
<dbReference type="STRING" id="195102.gene:10491785"/>
<dbReference type="KEGG" id="cpe:CPE2459"/>
<dbReference type="HOGENOM" id="CLU_032540_0_1_9"/>
<dbReference type="UniPathway" id="UPA00219"/>
<dbReference type="Proteomes" id="UP000000818">
    <property type="component" value="Chromosome"/>
</dbReference>
<dbReference type="GO" id="GO:0005737">
    <property type="term" value="C:cytoplasm"/>
    <property type="evidence" value="ECO:0007669"/>
    <property type="project" value="UniProtKB-SubCell"/>
</dbReference>
<dbReference type="GO" id="GO:0005524">
    <property type="term" value="F:ATP binding"/>
    <property type="evidence" value="ECO:0007669"/>
    <property type="project" value="UniProtKB-UniRule"/>
</dbReference>
<dbReference type="GO" id="GO:0008764">
    <property type="term" value="F:UDP-N-acetylmuramoylalanine-D-glutamate ligase activity"/>
    <property type="evidence" value="ECO:0007669"/>
    <property type="project" value="UniProtKB-UniRule"/>
</dbReference>
<dbReference type="GO" id="GO:0051301">
    <property type="term" value="P:cell division"/>
    <property type="evidence" value="ECO:0007669"/>
    <property type="project" value="UniProtKB-KW"/>
</dbReference>
<dbReference type="GO" id="GO:0071555">
    <property type="term" value="P:cell wall organization"/>
    <property type="evidence" value="ECO:0007669"/>
    <property type="project" value="UniProtKB-KW"/>
</dbReference>
<dbReference type="GO" id="GO:0009252">
    <property type="term" value="P:peptidoglycan biosynthetic process"/>
    <property type="evidence" value="ECO:0007669"/>
    <property type="project" value="UniProtKB-UniRule"/>
</dbReference>
<dbReference type="GO" id="GO:0008360">
    <property type="term" value="P:regulation of cell shape"/>
    <property type="evidence" value="ECO:0007669"/>
    <property type="project" value="UniProtKB-KW"/>
</dbReference>
<dbReference type="Gene3D" id="3.90.190.20">
    <property type="entry name" value="Mur ligase, C-terminal domain"/>
    <property type="match status" value="1"/>
</dbReference>
<dbReference type="Gene3D" id="3.40.1190.10">
    <property type="entry name" value="Mur-like, catalytic domain"/>
    <property type="match status" value="1"/>
</dbReference>
<dbReference type="Gene3D" id="3.40.50.720">
    <property type="entry name" value="NAD(P)-binding Rossmann-like Domain"/>
    <property type="match status" value="1"/>
</dbReference>
<dbReference type="HAMAP" id="MF_00639">
    <property type="entry name" value="MurD"/>
    <property type="match status" value="1"/>
</dbReference>
<dbReference type="InterPro" id="IPR036565">
    <property type="entry name" value="Mur-like_cat_sf"/>
</dbReference>
<dbReference type="InterPro" id="IPR004101">
    <property type="entry name" value="Mur_ligase_C"/>
</dbReference>
<dbReference type="InterPro" id="IPR036615">
    <property type="entry name" value="Mur_ligase_C_dom_sf"/>
</dbReference>
<dbReference type="InterPro" id="IPR013221">
    <property type="entry name" value="Mur_ligase_cen"/>
</dbReference>
<dbReference type="InterPro" id="IPR005762">
    <property type="entry name" value="MurD"/>
</dbReference>
<dbReference type="NCBIfam" id="TIGR01087">
    <property type="entry name" value="murD"/>
    <property type="match status" value="1"/>
</dbReference>
<dbReference type="PANTHER" id="PTHR43692">
    <property type="entry name" value="UDP-N-ACETYLMURAMOYLALANINE--D-GLUTAMATE LIGASE"/>
    <property type="match status" value="1"/>
</dbReference>
<dbReference type="PANTHER" id="PTHR43692:SF1">
    <property type="entry name" value="UDP-N-ACETYLMURAMOYLALANINE--D-GLUTAMATE LIGASE"/>
    <property type="match status" value="1"/>
</dbReference>
<dbReference type="Pfam" id="PF02875">
    <property type="entry name" value="Mur_ligase_C"/>
    <property type="match status" value="1"/>
</dbReference>
<dbReference type="Pfam" id="PF08245">
    <property type="entry name" value="Mur_ligase_M"/>
    <property type="match status" value="1"/>
</dbReference>
<dbReference type="SUPFAM" id="SSF51984">
    <property type="entry name" value="MurCD N-terminal domain"/>
    <property type="match status" value="1"/>
</dbReference>
<dbReference type="SUPFAM" id="SSF53623">
    <property type="entry name" value="MurD-like peptide ligases, catalytic domain"/>
    <property type="match status" value="1"/>
</dbReference>
<dbReference type="SUPFAM" id="SSF53244">
    <property type="entry name" value="MurD-like peptide ligases, peptide-binding domain"/>
    <property type="match status" value="1"/>
</dbReference>
<reference key="1">
    <citation type="journal article" date="2002" name="Proc. Natl. Acad. Sci. U.S.A.">
        <title>Complete genome sequence of Clostridium perfringens, an anaerobic flesh-eater.</title>
        <authorList>
            <person name="Shimizu T."/>
            <person name="Ohtani K."/>
            <person name="Hirakawa H."/>
            <person name="Ohshima K."/>
            <person name="Yamashita A."/>
            <person name="Shiba T."/>
            <person name="Ogasawara N."/>
            <person name="Hattori M."/>
            <person name="Kuhara S."/>
            <person name="Hayashi H."/>
        </authorList>
    </citation>
    <scope>NUCLEOTIDE SEQUENCE [LARGE SCALE GENOMIC DNA]</scope>
    <source>
        <strain>13 / Type A</strain>
    </source>
</reference>
<keyword id="KW-0067">ATP-binding</keyword>
<keyword id="KW-0131">Cell cycle</keyword>
<keyword id="KW-0132">Cell division</keyword>
<keyword id="KW-0133">Cell shape</keyword>
<keyword id="KW-0961">Cell wall biogenesis/degradation</keyword>
<keyword id="KW-0963">Cytoplasm</keyword>
<keyword id="KW-0436">Ligase</keyword>
<keyword id="KW-0547">Nucleotide-binding</keyword>
<keyword id="KW-0573">Peptidoglycan synthesis</keyword>
<keyword id="KW-1185">Reference proteome</keyword>
<comment type="function">
    <text evidence="1">Cell wall formation. Catalyzes the addition of glutamate to the nucleotide precursor UDP-N-acetylmuramoyl-L-alanine (UMA).</text>
</comment>
<comment type="catalytic activity">
    <reaction evidence="1">
        <text>UDP-N-acetyl-alpha-D-muramoyl-L-alanine + D-glutamate + ATP = UDP-N-acetyl-alpha-D-muramoyl-L-alanyl-D-glutamate + ADP + phosphate + H(+)</text>
        <dbReference type="Rhea" id="RHEA:16429"/>
        <dbReference type="ChEBI" id="CHEBI:15378"/>
        <dbReference type="ChEBI" id="CHEBI:29986"/>
        <dbReference type="ChEBI" id="CHEBI:30616"/>
        <dbReference type="ChEBI" id="CHEBI:43474"/>
        <dbReference type="ChEBI" id="CHEBI:83898"/>
        <dbReference type="ChEBI" id="CHEBI:83900"/>
        <dbReference type="ChEBI" id="CHEBI:456216"/>
        <dbReference type="EC" id="6.3.2.9"/>
    </reaction>
</comment>
<comment type="pathway">
    <text evidence="1">Cell wall biogenesis; peptidoglycan biosynthesis.</text>
</comment>
<comment type="subcellular location">
    <subcellularLocation>
        <location evidence="1">Cytoplasm</location>
    </subcellularLocation>
</comment>
<comment type="similarity">
    <text evidence="1">Belongs to the MurCDEF family.</text>
</comment>
<sequence>MKRDFNEFKEFIKGKNVAVVGIGVSNIPLIKFLVKLGAKVTAFDMKSAEELGEISKEFEILGVNLELGKGYLDRLTGFEVVFKTPSMRIDSEALLRCKKQGAYITSEMEEFVRYCKGRVYGVTGSDGKTTTTTIVSKLLSQEGYKTWTGGNIGTPLFSNIEEIKEEDKVVLELSSFQLMTMDVEIDVAIVTNITPNHLDMHKDMQEYIDAKKNVFKYQRENDLLVINDENEITKNLDKEAKGKVVRFSSKKTEGEDAYYKDGKLYVHGKEVCKKDNIIIKGMHNVENYLAAFLAVYDEVSIESMKKVAETFGGVHHRCEFIREVDGVKYYNDSIASTPTRTLAGLKAFEKPVILLAGGYDKHVPFEPLAYEGYEKIKAIVLFGVTKEKIKAAFKRLEEEKGIHVPVYSGESLEEVVNIAKSIAESGDIITLSPACASFDMFKNFEVRGDKFKEIVNNI</sequence>
<accession>Q8XHM4</accession>
<protein>
    <recommendedName>
        <fullName evidence="1">UDP-N-acetylmuramoylalanine--D-glutamate ligase</fullName>
        <ecNumber evidence="1">6.3.2.9</ecNumber>
    </recommendedName>
    <alternativeName>
        <fullName evidence="1">D-glutamic acid-adding enzyme</fullName>
    </alternativeName>
    <alternativeName>
        <fullName evidence="1">UDP-N-acetylmuramoyl-L-alanyl-D-glutamate synthetase</fullName>
    </alternativeName>
</protein>
<feature type="chain" id="PRO_0000109000" description="UDP-N-acetylmuramoylalanine--D-glutamate ligase">
    <location>
        <begin position="1"/>
        <end position="458"/>
    </location>
</feature>
<feature type="binding site" evidence="1">
    <location>
        <begin position="124"/>
        <end position="130"/>
    </location>
    <ligand>
        <name>ATP</name>
        <dbReference type="ChEBI" id="CHEBI:30616"/>
    </ligand>
</feature>
<gene>
    <name evidence="1" type="primary">murD</name>
    <name type="ordered locus">CPE2459</name>
</gene>